<organism>
    <name type="scientific">Gallus gallus</name>
    <name type="common">Chicken</name>
    <dbReference type="NCBI Taxonomy" id="9031"/>
    <lineage>
        <taxon>Eukaryota</taxon>
        <taxon>Metazoa</taxon>
        <taxon>Chordata</taxon>
        <taxon>Craniata</taxon>
        <taxon>Vertebrata</taxon>
        <taxon>Euteleostomi</taxon>
        <taxon>Archelosauria</taxon>
        <taxon>Archosauria</taxon>
        <taxon>Dinosauria</taxon>
        <taxon>Saurischia</taxon>
        <taxon>Theropoda</taxon>
        <taxon>Coelurosauria</taxon>
        <taxon>Aves</taxon>
        <taxon>Neognathae</taxon>
        <taxon>Galloanserae</taxon>
        <taxon>Galliformes</taxon>
        <taxon>Phasianidae</taxon>
        <taxon>Phasianinae</taxon>
        <taxon>Gallus</taxon>
    </lineage>
</organism>
<dbReference type="EMBL" id="AF224319">
    <property type="protein sequence ID" value="AAF61099.1"/>
    <property type="molecule type" value="mRNA"/>
</dbReference>
<dbReference type="SMR" id="Q9IA02"/>
<dbReference type="FunCoup" id="Q9IA02">
    <property type="interactions" value="19"/>
</dbReference>
<dbReference type="STRING" id="9031.ENSGALP00000048718"/>
<dbReference type="VEuPathDB" id="HostDB:geneid_373886"/>
<dbReference type="InParanoid" id="Q9IA02"/>
<dbReference type="OrthoDB" id="5959102at2759"/>
<dbReference type="PhylomeDB" id="Q9IA02"/>
<dbReference type="Proteomes" id="UP000000539">
    <property type="component" value="Unassembled WGS sequence"/>
</dbReference>
<dbReference type="GO" id="GO:0005615">
    <property type="term" value="C:extracellular space"/>
    <property type="evidence" value="ECO:0000318"/>
    <property type="project" value="GO_Central"/>
</dbReference>
<dbReference type="GO" id="GO:0005886">
    <property type="term" value="C:plasma membrane"/>
    <property type="evidence" value="ECO:0007669"/>
    <property type="project" value="UniProtKB-SubCell"/>
</dbReference>
<dbReference type="GO" id="GO:0004930">
    <property type="term" value="F:G protein-coupled receptor activity"/>
    <property type="evidence" value="ECO:0007669"/>
    <property type="project" value="UniProtKB-KW"/>
</dbReference>
<dbReference type="GO" id="GO:0017147">
    <property type="term" value="F:Wnt-protein binding"/>
    <property type="evidence" value="ECO:0000318"/>
    <property type="project" value="GO_Central"/>
</dbReference>
<dbReference type="GO" id="GO:0060070">
    <property type="term" value="P:canonical Wnt signaling pathway"/>
    <property type="evidence" value="ECO:0000318"/>
    <property type="project" value="GO_Central"/>
</dbReference>
<dbReference type="GO" id="GO:0035567">
    <property type="term" value="P:non-canonical Wnt signaling pathway"/>
    <property type="evidence" value="ECO:0000318"/>
    <property type="project" value="GO_Central"/>
</dbReference>
<dbReference type="CDD" id="cd15036">
    <property type="entry name" value="7tmF_FZD9"/>
    <property type="match status" value="1"/>
</dbReference>
<dbReference type="FunFam" id="1.20.1070.10:FF:000020">
    <property type="entry name" value="Frizzled class receptor 10"/>
    <property type="match status" value="1"/>
</dbReference>
<dbReference type="Gene3D" id="1.20.1070.10">
    <property type="entry name" value="Rhodopsin 7-helix transmembrane proteins"/>
    <property type="match status" value="1"/>
</dbReference>
<dbReference type="InterPro" id="IPR015526">
    <property type="entry name" value="Frizzled/SFRP"/>
</dbReference>
<dbReference type="InterPro" id="IPR000539">
    <property type="entry name" value="Frizzled/Smoothened_7TM"/>
</dbReference>
<dbReference type="InterPro" id="IPR017981">
    <property type="entry name" value="GPCR_2-like_7TM"/>
</dbReference>
<dbReference type="PANTHER" id="PTHR11309">
    <property type="entry name" value="FRIZZLED"/>
    <property type="match status" value="1"/>
</dbReference>
<dbReference type="PANTHER" id="PTHR11309:SF79">
    <property type="entry name" value="FRIZZLED-9"/>
    <property type="match status" value="1"/>
</dbReference>
<dbReference type="Pfam" id="PF01534">
    <property type="entry name" value="Frizzled"/>
    <property type="match status" value="1"/>
</dbReference>
<dbReference type="PRINTS" id="PR00489">
    <property type="entry name" value="FRIZZLED"/>
</dbReference>
<dbReference type="SMART" id="SM01330">
    <property type="entry name" value="Frizzled"/>
    <property type="match status" value="1"/>
</dbReference>
<dbReference type="PROSITE" id="PS50261">
    <property type="entry name" value="G_PROTEIN_RECEP_F2_4"/>
    <property type="match status" value="1"/>
</dbReference>
<keyword id="KW-1003">Cell membrane</keyword>
<keyword id="KW-0217">Developmental protein</keyword>
<keyword id="KW-0297">G-protein coupled receptor</keyword>
<keyword id="KW-0472">Membrane</keyword>
<keyword id="KW-0675">Receptor</keyword>
<keyword id="KW-1185">Reference proteome</keyword>
<keyword id="KW-0807">Transducer</keyword>
<keyword id="KW-0812">Transmembrane</keyword>
<keyword id="KW-1133">Transmembrane helix</keyword>
<keyword id="KW-0879">Wnt signaling pathway</keyword>
<evidence type="ECO:0000250" key="1"/>
<evidence type="ECO:0000250" key="2">
    <source>
        <dbReference type="UniProtKB" id="Q8K4C8"/>
    </source>
</evidence>
<evidence type="ECO:0000255" key="3"/>
<evidence type="ECO:0000305" key="4"/>
<name>FZD9_CHICK</name>
<gene>
    <name type="primary">FZD9</name>
    <name type="synonym">FZ9</name>
</gene>
<accession>Q9IA02</accession>
<comment type="function">
    <text evidence="2">Receptor for WNT2 that is coupled to the beta-catenin canonical signaling pathway, which leads to the activation of disheveled proteins, inhibition of GSK-3 kinase, nuclear accumulation of beta-catenin and activation of Wnt target genes.</text>
</comment>
<comment type="subcellular location">
    <subcellularLocation>
        <location evidence="2">Cell membrane</location>
        <topology evidence="3">Multi-pass membrane protein</topology>
    </subcellularLocation>
</comment>
<comment type="developmental stage">
    <text>At stages 3-9, expressed in the neural plate/tube. Seen at stages 10-15 in the somites. At stages 15-19, expressed in the dorsal trunk ectoderm and myotome.</text>
</comment>
<comment type="domain">
    <text evidence="1">Lys-Thr-X-X-X-Trp motif interacts with the PDZ domain of Dvl (Disheveled) family members and is involved in the activation of the Wnt/beta-catenin signaling pathway.</text>
</comment>
<comment type="domain">
    <text evidence="1">The FZ domain is involved in binding with Wnt ligands.</text>
</comment>
<comment type="similarity">
    <text evidence="4">Belongs to the G-protein coupled receptor Fz/Smo family.</text>
</comment>
<feature type="chain" id="PRO_0000205979" description="Frizzled-9">
    <location>
        <begin position="1" status="less than"/>
        <end position="392"/>
    </location>
</feature>
<feature type="topological domain" description="Extracellular" evidence="3">
    <location>
        <begin position="1" status="less than"/>
        <end position="35"/>
    </location>
</feature>
<feature type="transmembrane region" description="Helical; Name=1" evidence="3">
    <location>
        <begin position="36"/>
        <end position="56"/>
    </location>
</feature>
<feature type="topological domain" description="Cytoplasmic" evidence="3">
    <location>
        <begin position="57"/>
        <end position="72"/>
    </location>
</feature>
<feature type="transmembrane region" description="Helical; Name=2" evidence="3">
    <location>
        <begin position="73"/>
        <end position="93"/>
    </location>
</feature>
<feature type="topological domain" description="Extracellular" evidence="3">
    <location>
        <begin position="94"/>
        <end position="119"/>
    </location>
</feature>
<feature type="transmembrane region" description="Helical; Name=3" evidence="3">
    <location>
        <begin position="120"/>
        <end position="140"/>
    </location>
</feature>
<feature type="topological domain" description="Cytoplasmic" evidence="3">
    <location>
        <begin position="141"/>
        <end position="161"/>
    </location>
</feature>
<feature type="transmembrane region" description="Helical; Name=4" evidence="3">
    <location>
        <begin position="162"/>
        <end position="182"/>
    </location>
</feature>
<feature type="topological domain" description="Extracellular" evidence="3">
    <location>
        <begin position="183"/>
        <end position="206"/>
    </location>
</feature>
<feature type="transmembrane region" description="Helical; Name=5" evidence="3">
    <location>
        <begin position="207"/>
        <end position="227"/>
    </location>
</feature>
<feature type="topological domain" description="Cytoplasmic" evidence="3">
    <location>
        <begin position="228"/>
        <end position="253"/>
    </location>
</feature>
<feature type="transmembrane region" description="Helical; Name=6" evidence="3">
    <location>
        <begin position="254"/>
        <end position="274"/>
    </location>
</feature>
<feature type="topological domain" description="Extracellular" evidence="3">
    <location>
        <begin position="275"/>
        <end position="312"/>
    </location>
</feature>
<feature type="transmembrane region" description="Helical; Name=7" evidence="3">
    <location>
        <begin position="313"/>
        <end position="333"/>
    </location>
</feature>
<feature type="topological domain" description="Cytoplasmic" evidence="3">
    <location>
        <begin position="334"/>
        <end position="392"/>
    </location>
</feature>
<feature type="short sequence motif" description="Lys-Thr-X-X-X-Trp motif, mediates interaction with the PDZ domain of Dvl family members" evidence="1">
    <location>
        <begin position="336"/>
        <end position="341"/>
    </location>
</feature>
<feature type="short sequence motif" description="PDZ-binding">
    <location>
        <begin position="390"/>
        <end position="392"/>
    </location>
</feature>
<feature type="non-terminal residue">
    <location>
        <position position="1"/>
    </location>
</feature>
<protein>
    <recommendedName>
        <fullName>Frizzled-9</fullName>
        <shortName>Fz-9</shortName>
        <shortName>cFz-9</shortName>
    </recommendedName>
</protein>
<proteinExistence type="evidence at transcript level"/>
<reference key="1">
    <citation type="journal article" date="2000" name="Mech. Dev.">
        <title>Characterization of avian frizzled genes in cranial placode development.</title>
        <authorList>
            <person name="Stark M.R."/>
            <person name="Biggs J.J."/>
            <person name="Schoenwolf G.C."/>
            <person name="Rao M.S."/>
        </authorList>
    </citation>
    <scope>NUCLEOTIDE SEQUENCE [MRNA]</scope>
    <source>
        <tissue>Embryo</tissue>
    </source>
</reference>
<sequence length="392" mass="43899">ACDNPEKFQYVEKSLSCAPRCSPGVDVYWSREDKDFAFVWMAVWSTLCFVSTAFTVLTFLLDPHRFQYPERPIIFLSMCYNVYSVAFIIRSVAGAETIACDRENGELYIIQEGLESTGCTIVFLILYYFGMASSLWWVVLTLTWFLAAGKKWGHEAIEAHSSYFHMAAWGIPAMKTIVILTMRKVAGDELTGLCYVGSMDVSALTGFVLIPLSCYLVVGTSFILTGFVALFHIRKIMKTGGTNTEKLEKLMVKIGVFSILYTVPATCVIVCYFYERLNVDYWNLRALERACVPLPGRRAADCSLEASVPTVAVFMLKIFMSLVVGITSGVWVWSSKTLQTWQSLCNRKLGVRTRGKPCSGVSCGGVHCHYKAPTVMLHMTKTDPYLDNPTHV</sequence>